<protein>
    <recommendedName>
        <fullName>Uncharacterized protein TP_0772</fullName>
    </recommendedName>
</protein>
<organism>
    <name type="scientific">Treponema pallidum (strain Nichols)</name>
    <dbReference type="NCBI Taxonomy" id="243276"/>
    <lineage>
        <taxon>Bacteria</taxon>
        <taxon>Pseudomonadati</taxon>
        <taxon>Spirochaetota</taxon>
        <taxon>Spirochaetia</taxon>
        <taxon>Spirochaetales</taxon>
        <taxon>Treponemataceae</taxon>
        <taxon>Treponema</taxon>
    </lineage>
</organism>
<accession>O83751</accession>
<sequence>MCATLRPMETLGFCMLSPSTLPLRKWGIRLCRAGYRALGALLGTGVLVCCASSTNMTVSNDYPPKELGVLNAYTVDRLRTAISPRDFTFVFDPPIDTVLMQFKFLLDGITLYLERKDRTALREAIEKYLGEYEAQTLTREKSSERAYFGTTTPLMTWGILGSAHNATPTMRFEYQFITDDRPYFIIANRTIPGANGYNCPAVRIALSPAQCSQVMQYLDQGNLDALLEEMAQSFETFDTQQDPKKTPETDKNAAYKGKEKKGKKEERGPRSIMK</sequence>
<dbReference type="EMBL" id="AE000520">
    <property type="protein sequence ID" value="AAC65742.1"/>
    <property type="molecule type" value="Genomic_DNA"/>
</dbReference>
<dbReference type="PIR" id="A71284">
    <property type="entry name" value="A71284"/>
</dbReference>
<dbReference type="RefSeq" id="WP_010882217.1">
    <property type="nucleotide sequence ID" value="NC_021490.2"/>
</dbReference>
<dbReference type="SMR" id="O83751"/>
<dbReference type="IntAct" id="O83751">
    <property type="interactions" value="13"/>
</dbReference>
<dbReference type="STRING" id="243276.TP_0772"/>
<dbReference type="EnsemblBacteria" id="AAC65742">
    <property type="protein sequence ID" value="AAC65742"/>
    <property type="gene ID" value="TP_0772"/>
</dbReference>
<dbReference type="KEGG" id="tpa:TP_0772"/>
<dbReference type="KEGG" id="tpw:TPANIC_0772"/>
<dbReference type="eggNOG" id="ENOG5031C89">
    <property type="taxonomic scope" value="Bacteria"/>
</dbReference>
<dbReference type="HOGENOM" id="CLU_088597_0_0_12"/>
<dbReference type="OrthoDB" id="357689at2"/>
<dbReference type="Proteomes" id="UP000000811">
    <property type="component" value="Chromosome"/>
</dbReference>
<evidence type="ECO:0000256" key="1">
    <source>
        <dbReference type="SAM" id="MobiDB-lite"/>
    </source>
</evidence>
<gene>
    <name type="ordered locus">TP_0772</name>
</gene>
<reference key="1">
    <citation type="journal article" date="1998" name="Science">
        <title>Complete genome sequence of Treponema pallidum, the syphilis spirochete.</title>
        <authorList>
            <person name="Fraser C.M."/>
            <person name="Norris S.J."/>
            <person name="Weinstock G.M."/>
            <person name="White O."/>
            <person name="Sutton G.G."/>
            <person name="Dodson R.J."/>
            <person name="Gwinn M.L."/>
            <person name="Hickey E.K."/>
            <person name="Clayton R.A."/>
            <person name="Ketchum K.A."/>
            <person name="Sodergren E."/>
            <person name="Hardham J.M."/>
            <person name="McLeod M.P."/>
            <person name="Salzberg S.L."/>
            <person name="Peterson J.D."/>
            <person name="Khalak H.G."/>
            <person name="Richardson D.L."/>
            <person name="Howell J.K."/>
            <person name="Chidambaram M."/>
            <person name="Utterback T.R."/>
            <person name="McDonald L.A."/>
            <person name="Artiach P."/>
            <person name="Bowman C."/>
            <person name="Cotton M.D."/>
            <person name="Fujii C."/>
            <person name="Garland S.A."/>
            <person name="Hatch B."/>
            <person name="Horst K."/>
            <person name="Roberts K.M."/>
            <person name="Sandusky M."/>
            <person name="Weidman J.F."/>
            <person name="Smith H.O."/>
            <person name="Venter J.C."/>
        </authorList>
    </citation>
    <scope>NUCLEOTIDE SEQUENCE [LARGE SCALE GENOMIC DNA]</scope>
    <source>
        <strain>Nichols</strain>
    </source>
</reference>
<keyword id="KW-1185">Reference proteome</keyword>
<proteinExistence type="predicted"/>
<feature type="chain" id="PRO_0000202320" description="Uncharacterized protein TP_0772">
    <location>
        <begin position="1"/>
        <end position="274"/>
    </location>
</feature>
<feature type="region of interest" description="Disordered" evidence="1">
    <location>
        <begin position="235"/>
        <end position="274"/>
    </location>
</feature>
<feature type="compositionally biased region" description="Basic and acidic residues" evidence="1">
    <location>
        <begin position="241"/>
        <end position="274"/>
    </location>
</feature>
<name>Y772_TREPA</name>